<name>FPG_HYDCU</name>
<sequence>MPELPEVETTRKGIQPKVEGQAIQKIIIRNGKLRWPVDPSLVEKLPGLVVLSIKRRAKYLLLETDQGHLIIHLGMSGNLRVLPQHEPAVKHDHIDLLLENGFLLRYHDPRRFGSWLWTEAPIQEHSLLKSLGPEPLTDAFNAEYLFQKLQGRKTAIKTFIMNNQIVVGVGNIYANESLFLSGIHPTRPAQSLTLTEATKLTAHIKTVLSAAIEQGGTTLKDFLTPDGKPGYFEQKLNVYGRENLPCPQCDSAIEKVVLNQRAAYFCSNCQKQLDSTVKIK</sequence>
<gene>
    <name evidence="2" type="primary">mutM</name>
    <name evidence="2" type="synonym">fpg</name>
    <name type="ordered locus">Tcr_1921</name>
</gene>
<organism>
    <name type="scientific">Hydrogenovibrio crunogenus (strain DSM 25203 / XCL-2)</name>
    <name type="common">Thiomicrospira crunogena</name>
    <dbReference type="NCBI Taxonomy" id="317025"/>
    <lineage>
        <taxon>Bacteria</taxon>
        <taxon>Pseudomonadati</taxon>
        <taxon>Pseudomonadota</taxon>
        <taxon>Gammaproteobacteria</taxon>
        <taxon>Thiotrichales</taxon>
        <taxon>Piscirickettsiaceae</taxon>
        <taxon>Hydrogenovibrio</taxon>
    </lineage>
</organism>
<protein>
    <recommendedName>
        <fullName evidence="2">Formamidopyrimidine-DNA glycosylase</fullName>
        <shortName evidence="2">Fapy-DNA glycosylase</shortName>
        <ecNumber evidence="2">3.2.2.23</ecNumber>
    </recommendedName>
    <alternativeName>
        <fullName evidence="2">DNA-(apurinic or apyrimidinic site) lyase MutM</fullName>
        <shortName evidence="2">AP lyase MutM</shortName>
        <ecNumber evidence="2">4.2.99.18</ecNumber>
    </alternativeName>
</protein>
<reference key="1">
    <citation type="journal article" date="2006" name="PLoS Biol.">
        <title>The genome of deep-sea vent chemolithoautotroph Thiomicrospira crunogena XCL-2.</title>
        <authorList>
            <person name="Scott K.M."/>
            <person name="Sievert S.M."/>
            <person name="Abril F.N."/>
            <person name="Ball L.A."/>
            <person name="Barrett C.J."/>
            <person name="Blake R.A."/>
            <person name="Boller A.J."/>
            <person name="Chain P.S.G."/>
            <person name="Clark J.A."/>
            <person name="Davis C.R."/>
            <person name="Detter C."/>
            <person name="Do K.F."/>
            <person name="Dobrinski K.P."/>
            <person name="Faza B.I."/>
            <person name="Fitzpatrick K.A."/>
            <person name="Freyermuth S.K."/>
            <person name="Harmer T.L."/>
            <person name="Hauser L.J."/>
            <person name="Huegler M."/>
            <person name="Kerfeld C.A."/>
            <person name="Klotz M.G."/>
            <person name="Kong W.W."/>
            <person name="Land M."/>
            <person name="Lapidus A."/>
            <person name="Larimer F.W."/>
            <person name="Longo D.L."/>
            <person name="Lucas S."/>
            <person name="Malfatti S.A."/>
            <person name="Massey S.E."/>
            <person name="Martin D.D."/>
            <person name="McCuddin Z."/>
            <person name="Meyer F."/>
            <person name="Moore J.L."/>
            <person name="Ocampo L.H. Jr."/>
            <person name="Paul J.H."/>
            <person name="Paulsen I.T."/>
            <person name="Reep D.K."/>
            <person name="Ren Q."/>
            <person name="Ross R.L."/>
            <person name="Sato P.Y."/>
            <person name="Thomas P."/>
            <person name="Tinkham L.E."/>
            <person name="Zeruth G.T."/>
        </authorList>
    </citation>
    <scope>NUCLEOTIDE SEQUENCE [LARGE SCALE GENOMIC DNA]</scope>
    <source>
        <strain>DSM 25203 / XCL-2</strain>
    </source>
</reference>
<proteinExistence type="inferred from homology"/>
<keyword id="KW-0227">DNA damage</keyword>
<keyword id="KW-0234">DNA repair</keyword>
<keyword id="KW-0238">DNA-binding</keyword>
<keyword id="KW-0326">Glycosidase</keyword>
<keyword id="KW-0378">Hydrolase</keyword>
<keyword id="KW-0456">Lyase</keyword>
<keyword id="KW-0479">Metal-binding</keyword>
<keyword id="KW-0511">Multifunctional enzyme</keyword>
<keyword id="KW-0862">Zinc</keyword>
<keyword id="KW-0863">Zinc-finger</keyword>
<evidence type="ECO:0000250" key="1"/>
<evidence type="ECO:0000255" key="2">
    <source>
        <dbReference type="HAMAP-Rule" id="MF_00103"/>
    </source>
</evidence>
<accession>Q31EB2</accession>
<dbReference type="EC" id="3.2.2.23" evidence="2"/>
<dbReference type="EC" id="4.2.99.18" evidence="2"/>
<dbReference type="EMBL" id="CP000109">
    <property type="protein sequence ID" value="ABB42511.1"/>
    <property type="molecule type" value="Genomic_DNA"/>
</dbReference>
<dbReference type="SMR" id="Q31EB2"/>
<dbReference type="STRING" id="317025.Tcr_1921"/>
<dbReference type="KEGG" id="tcx:Tcr_1921"/>
<dbReference type="eggNOG" id="COG0266">
    <property type="taxonomic scope" value="Bacteria"/>
</dbReference>
<dbReference type="HOGENOM" id="CLU_038423_1_1_6"/>
<dbReference type="OrthoDB" id="9800855at2"/>
<dbReference type="GO" id="GO:0034039">
    <property type="term" value="F:8-oxo-7,8-dihydroguanine DNA N-glycosylase activity"/>
    <property type="evidence" value="ECO:0007669"/>
    <property type="project" value="TreeGrafter"/>
</dbReference>
<dbReference type="GO" id="GO:0140078">
    <property type="term" value="F:class I DNA-(apurinic or apyrimidinic site) endonuclease activity"/>
    <property type="evidence" value="ECO:0007669"/>
    <property type="project" value="UniProtKB-EC"/>
</dbReference>
<dbReference type="GO" id="GO:0003684">
    <property type="term" value="F:damaged DNA binding"/>
    <property type="evidence" value="ECO:0007669"/>
    <property type="project" value="InterPro"/>
</dbReference>
<dbReference type="GO" id="GO:0008270">
    <property type="term" value="F:zinc ion binding"/>
    <property type="evidence" value="ECO:0007669"/>
    <property type="project" value="UniProtKB-UniRule"/>
</dbReference>
<dbReference type="GO" id="GO:0006284">
    <property type="term" value="P:base-excision repair"/>
    <property type="evidence" value="ECO:0007669"/>
    <property type="project" value="InterPro"/>
</dbReference>
<dbReference type="CDD" id="cd08966">
    <property type="entry name" value="EcFpg-like_N"/>
    <property type="match status" value="1"/>
</dbReference>
<dbReference type="FunFam" id="1.10.8.50:FF:000003">
    <property type="entry name" value="Formamidopyrimidine-DNA glycosylase"/>
    <property type="match status" value="1"/>
</dbReference>
<dbReference type="FunFam" id="3.20.190.10:FF:000001">
    <property type="entry name" value="Formamidopyrimidine-DNA glycosylase"/>
    <property type="match status" value="1"/>
</dbReference>
<dbReference type="Gene3D" id="1.10.8.50">
    <property type="match status" value="1"/>
</dbReference>
<dbReference type="Gene3D" id="3.20.190.10">
    <property type="entry name" value="MutM-like, N-terminal"/>
    <property type="match status" value="1"/>
</dbReference>
<dbReference type="HAMAP" id="MF_00103">
    <property type="entry name" value="Fapy_DNA_glycosyl"/>
    <property type="match status" value="1"/>
</dbReference>
<dbReference type="InterPro" id="IPR015886">
    <property type="entry name" value="DNA_glyclase/AP_lyase_DNA-bd"/>
</dbReference>
<dbReference type="InterPro" id="IPR020629">
    <property type="entry name" value="Formamido-pyr_DNA_Glyclase"/>
</dbReference>
<dbReference type="InterPro" id="IPR012319">
    <property type="entry name" value="FPG_cat"/>
</dbReference>
<dbReference type="InterPro" id="IPR035937">
    <property type="entry name" value="MutM-like_N-ter"/>
</dbReference>
<dbReference type="InterPro" id="IPR010979">
    <property type="entry name" value="Ribosomal_uS13-like_H2TH"/>
</dbReference>
<dbReference type="InterPro" id="IPR000214">
    <property type="entry name" value="Znf_DNA_glyclase/AP_lyase"/>
</dbReference>
<dbReference type="InterPro" id="IPR010663">
    <property type="entry name" value="Znf_FPG/IleRS"/>
</dbReference>
<dbReference type="NCBIfam" id="TIGR00577">
    <property type="entry name" value="fpg"/>
    <property type="match status" value="1"/>
</dbReference>
<dbReference type="NCBIfam" id="NF002211">
    <property type="entry name" value="PRK01103.1"/>
    <property type="match status" value="1"/>
</dbReference>
<dbReference type="PANTHER" id="PTHR22993">
    <property type="entry name" value="FORMAMIDOPYRIMIDINE-DNA GLYCOSYLASE"/>
    <property type="match status" value="1"/>
</dbReference>
<dbReference type="PANTHER" id="PTHR22993:SF9">
    <property type="entry name" value="FORMAMIDOPYRIMIDINE-DNA GLYCOSYLASE"/>
    <property type="match status" value="1"/>
</dbReference>
<dbReference type="Pfam" id="PF01149">
    <property type="entry name" value="Fapy_DNA_glyco"/>
    <property type="match status" value="1"/>
</dbReference>
<dbReference type="Pfam" id="PF06831">
    <property type="entry name" value="H2TH"/>
    <property type="match status" value="1"/>
</dbReference>
<dbReference type="Pfam" id="PF06827">
    <property type="entry name" value="zf-FPG_IleRS"/>
    <property type="match status" value="1"/>
</dbReference>
<dbReference type="SMART" id="SM00898">
    <property type="entry name" value="Fapy_DNA_glyco"/>
    <property type="match status" value="1"/>
</dbReference>
<dbReference type="SMART" id="SM01232">
    <property type="entry name" value="H2TH"/>
    <property type="match status" value="1"/>
</dbReference>
<dbReference type="SUPFAM" id="SSF57716">
    <property type="entry name" value="Glucocorticoid receptor-like (DNA-binding domain)"/>
    <property type="match status" value="1"/>
</dbReference>
<dbReference type="SUPFAM" id="SSF81624">
    <property type="entry name" value="N-terminal domain of MutM-like DNA repair proteins"/>
    <property type="match status" value="1"/>
</dbReference>
<dbReference type="SUPFAM" id="SSF46946">
    <property type="entry name" value="S13-like H2TH domain"/>
    <property type="match status" value="1"/>
</dbReference>
<dbReference type="PROSITE" id="PS51068">
    <property type="entry name" value="FPG_CAT"/>
    <property type="match status" value="1"/>
</dbReference>
<dbReference type="PROSITE" id="PS51066">
    <property type="entry name" value="ZF_FPG_2"/>
    <property type="match status" value="1"/>
</dbReference>
<feature type="initiator methionine" description="Removed" evidence="1">
    <location>
        <position position="1"/>
    </location>
</feature>
<feature type="chain" id="PRO_1000008786" description="Formamidopyrimidine-DNA glycosylase">
    <location>
        <begin position="2"/>
        <end position="280"/>
    </location>
</feature>
<feature type="zinc finger region" description="FPG-type" evidence="2">
    <location>
        <begin position="237"/>
        <end position="271"/>
    </location>
</feature>
<feature type="active site" description="Schiff-base intermediate with DNA" evidence="2">
    <location>
        <position position="2"/>
    </location>
</feature>
<feature type="active site" description="Proton donor" evidence="2">
    <location>
        <position position="3"/>
    </location>
</feature>
<feature type="active site" description="Proton donor; for beta-elimination activity" evidence="2">
    <location>
        <position position="58"/>
    </location>
</feature>
<feature type="active site" description="Proton donor; for delta-elimination activity" evidence="2">
    <location>
        <position position="261"/>
    </location>
</feature>
<feature type="binding site" evidence="2">
    <location>
        <position position="91"/>
    </location>
    <ligand>
        <name>DNA</name>
        <dbReference type="ChEBI" id="CHEBI:16991"/>
    </ligand>
</feature>
<feature type="binding site" evidence="2">
    <location>
        <position position="110"/>
    </location>
    <ligand>
        <name>DNA</name>
        <dbReference type="ChEBI" id="CHEBI:16991"/>
    </ligand>
</feature>
<feature type="binding site" evidence="2">
    <location>
        <position position="152"/>
    </location>
    <ligand>
        <name>DNA</name>
        <dbReference type="ChEBI" id="CHEBI:16991"/>
    </ligand>
</feature>
<comment type="function">
    <text evidence="2">Involved in base excision repair of DNA damaged by oxidation or by mutagenic agents. Acts as a DNA glycosylase that recognizes and removes damaged bases. Has a preference for oxidized purines, such as 7,8-dihydro-8-oxoguanine (8-oxoG). Has AP (apurinic/apyrimidinic) lyase activity and introduces nicks in the DNA strand. Cleaves the DNA backbone by beta-delta elimination to generate a single-strand break at the site of the removed base with both 3'- and 5'-phosphates.</text>
</comment>
<comment type="catalytic activity">
    <reaction evidence="2">
        <text>Hydrolysis of DNA containing ring-opened 7-methylguanine residues, releasing 2,6-diamino-4-hydroxy-5-(N-methyl)formamidopyrimidine.</text>
        <dbReference type="EC" id="3.2.2.23"/>
    </reaction>
</comment>
<comment type="catalytic activity">
    <reaction evidence="2">
        <text>2'-deoxyribonucleotide-(2'-deoxyribose 5'-phosphate)-2'-deoxyribonucleotide-DNA = a 3'-end 2'-deoxyribonucleotide-(2,3-dehydro-2,3-deoxyribose 5'-phosphate)-DNA + a 5'-end 5'-phospho-2'-deoxyribonucleoside-DNA + H(+)</text>
        <dbReference type="Rhea" id="RHEA:66592"/>
        <dbReference type="Rhea" id="RHEA-COMP:13180"/>
        <dbReference type="Rhea" id="RHEA-COMP:16897"/>
        <dbReference type="Rhea" id="RHEA-COMP:17067"/>
        <dbReference type="ChEBI" id="CHEBI:15378"/>
        <dbReference type="ChEBI" id="CHEBI:136412"/>
        <dbReference type="ChEBI" id="CHEBI:157695"/>
        <dbReference type="ChEBI" id="CHEBI:167181"/>
        <dbReference type="EC" id="4.2.99.18"/>
    </reaction>
</comment>
<comment type="cofactor">
    <cofactor evidence="2">
        <name>Zn(2+)</name>
        <dbReference type="ChEBI" id="CHEBI:29105"/>
    </cofactor>
    <text evidence="2">Binds 1 zinc ion per subunit.</text>
</comment>
<comment type="subunit">
    <text evidence="2">Monomer.</text>
</comment>
<comment type="similarity">
    <text evidence="2">Belongs to the FPG family.</text>
</comment>